<organism>
    <name type="scientific">Bacillus pumilus (strain SAFR-032)</name>
    <dbReference type="NCBI Taxonomy" id="315750"/>
    <lineage>
        <taxon>Bacteria</taxon>
        <taxon>Bacillati</taxon>
        <taxon>Bacillota</taxon>
        <taxon>Bacilli</taxon>
        <taxon>Bacillales</taxon>
        <taxon>Bacillaceae</taxon>
        <taxon>Bacillus</taxon>
    </lineage>
</organism>
<accession>A8FHJ0</accession>
<name>ENO_BACP2</name>
<proteinExistence type="inferred from homology"/>
<reference key="1">
    <citation type="journal article" date="2007" name="PLoS ONE">
        <title>Paradoxical DNA repair and peroxide resistance gene conservation in Bacillus pumilus SAFR-032.</title>
        <authorList>
            <person name="Gioia J."/>
            <person name="Yerrapragada S."/>
            <person name="Qin X."/>
            <person name="Jiang H."/>
            <person name="Igboeli O.C."/>
            <person name="Muzny D."/>
            <person name="Dugan-Rocha S."/>
            <person name="Ding Y."/>
            <person name="Hawes A."/>
            <person name="Liu W."/>
            <person name="Perez L."/>
            <person name="Kovar C."/>
            <person name="Dinh H."/>
            <person name="Lee S."/>
            <person name="Nazareth L."/>
            <person name="Blyth P."/>
            <person name="Holder M."/>
            <person name="Buhay C."/>
            <person name="Tirumalai M.R."/>
            <person name="Liu Y."/>
            <person name="Dasgupta I."/>
            <person name="Bokhetache L."/>
            <person name="Fujita M."/>
            <person name="Karouia F."/>
            <person name="Eswara Moorthy P."/>
            <person name="Siefert J."/>
            <person name="Uzman A."/>
            <person name="Buzumbo P."/>
            <person name="Verma A."/>
            <person name="Zwiya H."/>
            <person name="McWilliams B.D."/>
            <person name="Olowu A."/>
            <person name="Clinkenbeard K.D."/>
            <person name="Newcombe D."/>
            <person name="Golebiewski L."/>
            <person name="Petrosino J.F."/>
            <person name="Nicholson W.L."/>
            <person name="Fox G.E."/>
            <person name="Venkateswaran K."/>
            <person name="Highlander S.K."/>
            <person name="Weinstock G.M."/>
        </authorList>
    </citation>
    <scope>NUCLEOTIDE SEQUENCE [LARGE SCALE GENOMIC DNA]</scope>
    <source>
        <strain>SAFR-032</strain>
    </source>
</reference>
<feature type="chain" id="PRO_1000059456" description="Enolase">
    <location>
        <begin position="1"/>
        <end position="430"/>
    </location>
</feature>
<feature type="active site" description="Proton donor" evidence="1">
    <location>
        <position position="205"/>
    </location>
</feature>
<feature type="active site" description="Proton acceptor" evidence="1">
    <location>
        <position position="339"/>
    </location>
</feature>
<feature type="binding site" evidence="1">
    <location>
        <position position="163"/>
    </location>
    <ligand>
        <name>(2R)-2-phosphoglycerate</name>
        <dbReference type="ChEBI" id="CHEBI:58289"/>
    </ligand>
</feature>
<feature type="binding site" evidence="1">
    <location>
        <position position="242"/>
    </location>
    <ligand>
        <name>Mg(2+)</name>
        <dbReference type="ChEBI" id="CHEBI:18420"/>
    </ligand>
</feature>
<feature type="binding site" evidence="1">
    <location>
        <position position="287"/>
    </location>
    <ligand>
        <name>Mg(2+)</name>
        <dbReference type="ChEBI" id="CHEBI:18420"/>
    </ligand>
</feature>
<feature type="binding site" evidence="1">
    <location>
        <position position="314"/>
    </location>
    <ligand>
        <name>Mg(2+)</name>
        <dbReference type="ChEBI" id="CHEBI:18420"/>
    </ligand>
</feature>
<feature type="binding site" evidence="1">
    <location>
        <position position="339"/>
    </location>
    <ligand>
        <name>(2R)-2-phosphoglycerate</name>
        <dbReference type="ChEBI" id="CHEBI:58289"/>
    </ligand>
</feature>
<feature type="binding site" evidence="1">
    <location>
        <position position="368"/>
    </location>
    <ligand>
        <name>(2R)-2-phosphoglycerate</name>
        <dbReference type="ChEBI" id="CHEBI:58289"/>
    </ligand>
</feature>
<feature type="binding site" evidence="1">
    <location>
        <position position="369"/>
    </location>
    <ligand>
        <name>(2R)-2-phosphoglycerate</name>
        <dbReference type="ChEBI" id="CHEBI:58289"/>
    </ligand>
</feature>
<feature type="binding site" evidence="1">
    <location>
        <position position="390"/>
    </location>
    <ligand>
        <name>(2R)-2-phosphoglycerate</name>
        <dbReference type="ChEBI" id="CHEBI:58289"/>
    </ligand>
</feature>
<sequence>MPYIVDVYAREVLDSRGNPTVEVEVYTESGGFGRALVPSGASTGEYEAVELRDGDKDRYLGKGVLTAVNNVNEIIAPELLGFDVTEQVAIDKMLIELDGTENKGKLGANAILGVSIAVARAAADFLQIPLYQYLGGFNSKTLPVPMMNIVNGGEHADNNVDIQEFMIMPVGAPNFREALRMGAQIFHSLKSVLSAKGLNTAVGDEGGFAPNLGSNEEALQTIVEAIEKAGFKPGEEVKLAMDAASSEFYNKEDGKYHLSGEGVVKTSAEMVDWYEDMVSKYPIISIEDGLDENDWEGHKLLTERLGSKVQLVGDDLFVTNTKKLSEGIKNGVGNSILIKVNQIGTLTETFDAIEMAKRAGYTAVISHRSGETEDSTIADIAVATNAGQIKTGAPSRTDRVAKYNQLLRIEDQLAETAQYHGIETFYNLNK</sequence>
<comment type="function">
    <text evidence="1">Catalyzes the reversible conversion of 2-phosphoglycerate (2-PG) into phosphoenolpyruvate (PEP). It is essential for the degradation of carbohydrates via glycolysis.</text>
</comment>
<comment type="catalytic activity">
    <reaction evidence="1">
        <text>(2R)-2-phosphoglycerate = phosphoenolpyruvate + H2O</text>
        <dbReference type="Rhea" id="RHEA:10164"/>
        <dbReference type="ChEBI" id="CHEBI:15377"/>
        <dbReference type="ChEBI" id="CHEBI:58289"/>
        <dbReference type="ChEBI" id="CHEBI:58702"/>
        <dbReference type="EC" id="4.2.1.11"/>
    </reaction>
</comment>
<comment type="cofactor">
    <cofactor evidence="1">
        <name>Mg(2+)</name>
        <dbReference type="ChEBI" id="CHEBI:18420"/>
    </cofactor>
    <text evidence="1">Binds a second Mg(2+) ion via substrate during catalysis.</text>
</comment>
<comment type="pathway">
    <text evidence="1">Carbohydrate degradation; glycolysis; pyruvate from D-glyceraldehyde 3-phosphate: step 4/5.</text>
</comment>
<comment type="subcellular location">
    <subcellularLocation>
        <location evidence="1">Cytoplasm</location>
    </subcellularLocation>
    <subcellularLocation>
        <location evidence="1">Secreted</location>
    </subcellularLocation>
    <subcellularLocation>
        <location evidence="1">Cell surface</location>
    </subcellularLocation>
    <text evidence="1">Fractions of enolase are present in both the cytoplasm and on the cell surface.</text>
</comment>
<comment type="similarity">
    <text evidence="1">Belongs to the enolase family.</text>
</comment>
<keyword id="KW-0963">Cytoplasm</keyword>
<keyword id="KW-0324">Glycolysis</keyword>
<keyword id="KW-0456">Lyase</keyword>
<keyword id="KW-0460">Magnesium</keyword>
<keyword id="KW-0479">Metal-binding</keyword>
<keyword id="KW-0964">Secreted</keyword>
<evidence type="ECO:0000255" key="1">
    <source>
        <dbReference type="HAMAP-Rule" id="MF_00318"/>
    </source>
</evidence>
<gene>
    <name evidence="1" type="primary">eno</name>
    <name type="ordered locus">BPUM_3053</name>
</gene>
<protein>
    <recommendedName>
        <fullName evidence="1">Enolase</fullName>
        <ecNumber evidence="1">4.2.1.11</ecNumber>
    </recommendedName>
    <alternativeName>
        <fullName evidence="1">2-phospho-D-glycerate hydro-lyase</fullName>
    </alternativeName>
    <alternativeName>
        <fullName evidence="1">2-phosphoglycerate dehydratase</fullName>
    </alternativeName>
</protein>
<dbReference type="EC" id="4.2.1.11" evidence="1"/>
<dbReference type="EMBL" id="CP000813">
    <property type="protein sequence ID" value="ABV63707.1"/>
    <property type="molecule type" value="Genomic_DNA"/>
</dbReference>
<dbReference type="RefSeq" id="WP_012011300.1">
    <property type="nucleotide sequence ID" value="NZ_VEIS01000009.1"/>
</dbReference>
<dbReference type="SMR" id="A8FHJ0"/>
<dbReference type="STRING" id="315750.BPUM_3053"/>
<dbReference type="GeneID" id="5622343"/>
<dbReference type="KEGG" id="bpu:BPUM_3053"/>
<dbReference type="eggNOG" id="COG0148">
    <property type="taxonomic scope" value="Bacteria"/>
</dbReference>
<dbReference type="HOGENOM" id="CLU_031223_2_1_9"/>
<dbReference type="OrthoDB" id="9804716at2"/>
<dbReference type="UniPathway" id="UPA00109">
    <property type="reaction ID" value="UER00187"/>
</dbReference>
<dbReference type="Proteomes" id="UP000001355">
    <property type="component" value="Chromosome"/>
</dbReference>
<dbReference type="GO" id="GO:0009986">
    <property type="term" value="C:cell surface"/>
    <property type="evidence" value="ECO:0007669"/>
    <property type="project" value="UniProtKB-SubCell"/>
</dbReference>
<dbReference type="GO" id="GO:0005576">
    <property type="term" value="C:extracellular region"/>
    <property type="evidence" value="ECO:0007669"/>
    <property type="project" value="UniProtKB-SubCell"/>
</dbReference>
<dbReference type="GO" id="GO:0000015">
    <property type="term" value="C:phosphopyruvate hydratase complex"/>
    <property type="evidence" value="ECO:0007669"/>
    <property type="project" value="InterPro"/>
</dbReference>
<dbReference type="GO" id="GO:0000287">
    <property type="term" value="F:magnesium ion binding"/>
    <property type="evidence" value="ECO:0007669"/>
    <property type="project" value="UniProtKB-UniRule"/>
</dbReference>
<dbReference type="GO" id="GO:0004634">
    <property type="term" value="F:phosphopyruvate hydratase activity"/>
    <property type="evidence" value="ECO:0007669"/>
    <property type="project" value="UniProtKB-UniRule"/>
</dbReference>
<dbReference type="GO" id="GO:0006096">
    <property type="term" value="P:glycolytic process"/>
    <property type="evidence" value="ECO:0007669"/>
    <property type="project" value="UniProtKB-UniRule"/>
</dbReference>
<dbReference type="CDD" id="cd03313">
    <property type="entry name" value="enolase"/>
    <property type="match status" value="1"/>
</dbReference>
<dbReference type="FunFam" id="3.20.20.120:FF:000001">
    <property type="entry name" value="Enolase"/>
    <property type="match status" value="1"/>
</dbReference>
<dbReference type="FunFam" id="3.30.390.10:FF:000001">
    <property type="entry name" value="Enolase"/>
    <property type="match status" value="1"/>
</dbReference>
<dbReference type="Gene3D" id="3.20.20.120">
    <property type="entry name" value="Enolase-like C-terminal domain"/>
    <property type="match status" value="1"/>
</dbReference>
<dbReference type="Gene3D" id="3.30.390.10">
    <property type="entry name" value="Enolase-like, N-terminal domain"/>
    <property type="match status" value="1"/>
</dbReference>
<dbReference type="HAMAP" id="MF_00318">
    <property type="entry name" value="Enolase"/>
    <property type="match status" value="1"/>
</dbReference>
<dbReference type="InterPro" id="IPR000941">
    <property type="entry name" value="Enolase"/>
</dbReference>
<dbReference type="InterPro" id="IPR036849">
    <property type="entry name" value="Enolase-like_C_sf"/>
</dbReference>
<dbReference type="InterPro" id="IPR029017">
    <property type="entry name" value="Enolase-like_N"/>
</dbReference>
<dbReference type="InterPro" id="IPR020810">
    <property type="entry name" value="Enolase_C"/>
</dbReference>
<dbReference type="InterPro" id="IPR020809">
    <property type="entry name" value="Enolase_CS"/>
</dbReference>
<dbReference type="InterPro" id="IPR020811">
    <property type="entry name" value="Enolase_N"/>
</dbReference>
<dbReference type="NCBIfam" id="TIGR01060">
    <property type="entry name" value="eno"/>
    <property type="match status" value="1"/>
</dbReference>
<dbReference type="PANTHER" id="PTHR11902">
    <property type="entry name" value="ENOLASE"/>
    <property type="match status" value="1"/>
</dbReference>
<dbReference type="PANTHER" id="PTHR11902:SF1">
    <property type="entry name" value="ENOLASE"/>
    <property type="match status" value="1"/>
</dbReference>
<dbReference type="Pfam" id="PF00113">
    <property type="entry name" value="Enolase_C"/>
    <property type="match status" value="1"/>
</dbReference>
<dbReference type="Pfam" id="PF03952">
    <property type="entry name" value="Enolase_N"/>
    <property type="match status" value="1"/>
</dbReference>
<dbReference type="PIRSF" id="PIRSF001400">
    <property type="entry name" value="Enolase"/>
    <property type="match status" value="1"/>
</dbReference>
<dbReference type="PRINTS" id="PR00148">
    <property type="entry name" value="ENOLASE"/>
</dbReference>
<dbReference type="SFLD" id="SFLDF00002">
    <property type="entry name" value="enolase"/>
    <property type="match status" value="1"/>
</dbReference>
<dbReference type="SFLD" id="SFLDG00178">
    <property type="entry name" value="enolase"/>
    <property type="match status" value="1"/>
</dbReference>
<dbReference type="SMART" id="SM01192">
    <property type="entry name" value="Enolase_C"/>
    <property type="match status" value="1"/>
</dbReference>
<dbReference type="SMART" id="SM01193">
    <property type="entry name" value="Enolase_N"/>
    <property type="match status" value="1"/>
</dbReference>
<dbReference type="SUPFAM" id="SSF51604">
    <property type="entry name" value="Enolase C-terminal domain-like"/>
    <property type="match status" value="1"/>
</dbReference>
<dbReference type="SUPFAM" id="SSF54826">
    <property type="entry name" value="Enolase N-terminal domain-like"/>
    <property type="match status" value="1"/>
</dbReference>
<dbReference type="PROSITE" id="PS00164">
    <property type="entry name" value="ENOLASE"/>
    <property type="match status" value="1"/>
</dbReference>